<reference key="1">
    <citation type="journal article" date="2005" name="Genome Res.">
        <title>Sequence, annotation, and analysis of synteny between rice chromosome 3 and diverged grass species.</title>
        <authorList>
            <consortium name="The rice chromosome 3 sequencing consortium"/>
            <person name="Buell C.R."/>
            <person name="Yuan Q."/>
            <person name="Ouyang S."/>
            <person name="Liu J."/>
            <person name="Zhu W."/>
            <person name="Wang A."/>
            <person name="Maiti R."/>
            <person name="Haas B."/>
            <person name="Wortman J."/>
            <person name="Pertea M."/>
            <person name="Jones K.M."/>
            <person name="Kim M."/>
            <person name="Overton L."/>
            <person name="Tsitrin T."/>
            <person name="Fadrosh D."/>
            <person name="Bera J."/>
            <person name="Weaver B."/>
            <person name="Jin S."/>
            <person name="Johri S."/>
            <person name="Reardon M."/>
            <person name="Webb K."/>
            <person name="Hill J."/>
            <person name="Moffat K."/>
            <person name="Tallon L."/>
            <person name="Van Aken S."/>
            <person name="Lewis M."/>
            <person name="Utterback T."/>
            <person name="Feldblyum T."/>
            <person name="Zismann V."/>
            <person name="Iobst S."/>
            <person name="Hsiao J."/>
            <person name="de Vazeille A.R."/>
            <person name="Salzberg S.L."/>
            <person name="White O."/>
            <person name="Fraser C.M."/>
            <person name="Yu Y."/>
            <person name="Kim H."/>
            <person name="Rambo T."/>
            <person name="Currie J."/>
            <person name="Collura K."/>
            <person name="Kernodle-Thompson S."/>
            <person name="Wei F."/>
            <person name="Kudrna K."/>
            <person name="Ammiraju J.S.S."/>
            <person name="Luo M."/>
            <person name="Goicoechea J.L."/>
            <person name="Wing R.A."/>
            <person name="Henry D."/>
            <person name="Oates R."/>
            <person name="Palmer M."/>
            <person name="Pries G."/>
            <person name="Saski C."/>
            <person name="Simmons J."/>
            <person name="Soderlund C."/>
            <person name="Nelson W."/>
            <person name="de la Bastide M."/>
            <person name="Spiegel L."/>
            <person name="Nascimento L."/>
            <person name="Huang E."/>
            <person name="Preston R."/>
            <person name="Zutavern T."/>
            <person name="Palmer L."/>
            <person name="O'Shaughnessy A."/>
            <person name="Dike S."/>
            <person name="McCombie W.R."/>
            <person name="Minx P."/>
            <person name="Cordum H."/>
            <person name="Wilson R."/>
            <person name="Jin W."/>
            <person name="Lee H.R."/>
            <person name="Jiang J."/>
            <person name="Jackson S."/>
        </authorList>
    </citation>
    <scope>NUCLEOTIDE SEQUENCE [LARGE SCALE GENOMIC DNA]</scope>
    <source>
        <strain>cv. Nipponbare</strain>
    </source>
</reference>
<reference key="2">
    <citation type="journal article" date="2005" name="Nature">
        <title>The map-based sequence of the rice genome.</title>
        <authorList>
            <consortium name="International rice genome sequencing project (IRGSP)"/>
        </authorList>
    </citation>
    <scope>NUCLEOTIDE SEQUENCE [LARGE SCALE GENOMIC DNA]</scope>
    <source>
        <strain>cv. Nipponbare</strain>
    </source>
</reference>
<reference key="3">
    <citation type="journal article" date="2008" name="Nucleic Acids Res.">
        <title>The rice annotation project database (RAP-DB): 2008 update.</title>
        <authorList>
            <consortium name="The rice annotation project (RAP)"/>
        </authorList>
    </citation>
    <scope>GENOME REANNOTATION</scope>
    <source>
        <strain>cv. Nipponbare</strain>
    </source>
</reference>
<reference key="4">
    <citation type="journal article" date="2013" name="Rice">
        <title>Improvement of the Oryza sativa Nipponbare reference genome using next generation sequence and optical map data.</title>
        <authorList>
            <person name="Kawahara Y."/>
            <person name="de la Bastide M."/>
            <person name="Hamilton J.P."/>
            <person name="Kanamori H."/>
            <person name="McCombie W.R."/>
            <person name="Ouyang S."/>
            <person name="Schwartz D.C."/>
            <person name="Tanaka T."/>
            <person name="Wu J."/>
            <person name="Zhou S."/>
            <person name="Childs K.L."/>
            <person name="Davidson R.M."/>
            <person name="Lin H."/>
            <person name="Quesada-Ocampo L."/>
            <person name="Vaillancourt B."/>
            <person name="Sakai H."/>
            <person name="Lee S.S."/>
            <person name="Kim J."/>
            <person name="Numa H."/>
            <person name="Itoh T."/>
            <person name="Buell C.R."/>
            <person name="Matsumoto T."/>
        </authorList>
    </citation>
    <scope>GENOME REANNOTATION</scope>
    <source>
        <strain>cv. Nipponbare</strain>
    </source>
</reference>
<reference key="5">
    <citation type="journal article" date="2005" name="PLoS Biol.">
        <title>The genomes of Oryza sativa: a history of duplications.</title>
        <authorList>
            <person name="Yu J."/>
            <person name="Wang J."/>
            <person name="Lin W."/>
            <person name="Li S."/>
            <person name="Li H."/>
            <person name="Zhou J."/>
            <person name="Ni P."/>
            <person name="Dong W."/>
            <person name="Hu S."/>
            <person name="Zeng C."/>
            <person name="Zhang J."/>
            <person name="Zhang Y."/>
            <person name="Li R."/>
            <person name="Xu Z."/>
            <person name="Li S."/>
            <person name="Li X."/>
            <person name="Zheng H."/>
            <person name="Cong L."/>
            <person name="Lin L."/>
            <person name="Yin J."/>
            <person name="Geng J."/>
            <person name="Li G."/>
            <person name="Shi J."/>
            <person name="Liu J."/>
            <person name="Lv H."/>
            <person name="Li J."/>
            <person name="Wang J."/>
            <person name="Deng Y."/>
            <person name="Ran L."/>
            <person name="Shi X."/>
            <person name="Wang X."/>
            <person name="Wu Q."/>
            <person name="Li C."/>
            <person name="Ren X."/>
            <person name="Wang J."/>
            <person name="Wang X."/>
            <person name="Li D."/>
            <person name="Liu D."/>
            <person name="Zhang X."/>
            <person name="Ji Z."/>
            <person name="Zhao W."/>
            <person name="Sun Y."/>
            <person name="Zhang Z."/>
            <person name="Bao J."/>
            <person name="Han Y."/>
            <person name="Dong L."/>
            <person name="Ji J."/>
            <person name="Chen P."/>
            <person name="Wu S."/>
            <person name="Liu J."/>
            <person name="Xiao Y."/>
            <person name="Bu D."/>
            <person name="Tan J."/>
            <person name="Yang L."/>
            <person name="Ye C."/>
            <person name="Zhang J."/>
            <person name="Xu J."/>
            <person name="Zhou Y."/>
            <person name="Yu Y."/>
            <person name="Zhang B."/>
            <person name="Zhuang S."/>
            <person name="Wei H."/>
            <person name="Liu B."/>
            <person name="Lei M."/>
            <person name="Yu H."/>
            <person name="Li Y."/>
            <person name="Xu H."/>
            <person name="Wei S."/>
            <person name="He X."/>
            <person name="Fang L."/>
            <person name="Zhang Z."/>
            <person name="Zhang Y."/>
            <person name="Huang X."/>
            <person name="Su Z."/>
            <person name="Tong W."/>
            <person name="Li J."/>
            <person name="Tong Z."/>
            <person name="Li S."/>
            <person name="Ye J."/>
            <person name="Wang L."/>
            <person name="Fang L."/>
            <person name="Lei T."/>
            <person name="Chen C.-S."/>
            <person name="Chen H.-C."/>
            <person name="Xu Z."/>
            <person name="Li H."/>
            <person name="Huang H."/>
            <person name="Zhang F."/>
            <person name="Xu H."/>
            <person name="Li N."/>
            <person name="Zhao C."/>
            <person name="Li S."/>
            <person name="Dong L."/>
            <person name="Huang Y."/>
            <person name="Li L."/>
            <person name="Xi Y."/>
            <person name="Qi Q."/>
            <person name="Li W."/>
            <person name="Zhang B."/>
            <person name="Hu W."/>
            <person name="Zhang Y."/>
            <person name="Tian X."/>
            <person name="Jiao Y."/>
            <person name="Liang X."/>
            <person name="Jin J."/>
            <person name="Gao L."/>
            <person name="Zheng W."/>
            <person name="Hao B."/>
            <person name="Liu S.-M."/>
            <person name="Wang W."/>
            <person name="Yuan L."/>
            <person name="Cao M."/>
            <person name="McDermott J."/>
            <person name="Samudrala R."/>
            <person name="Wang J."/>
            <person name="Wong G.K.-S."/>
            <person name="Yang H."/>
        </authorList>
    </citation>
    <scope>NUCLEOTIDE SEQUENCE [LARGE SCALE GENOMIC DNA]</scope>
    <source>
        <strain>cv. Nipponbare</strain>
    </source>
</reference>
<reference key="6">
    <citation type="journal article" date="2003" name="Science">
        <title>Collection, mapping, and annotation of over 28,000 cDNA clones from japonica rice.</title>
        <authorList>
            <consortium name="The rice full-length cDNA consortium"/>
        </authorList>
    </citation>
    <scope>NUCLEOTIDE SEQUENCE [LARGE SCALE MRNA]</scope>
    <source>
        <strain>cv. Nipponbare</strain>
    </source>
</reference>
<comment type="function">
    <text evidence="1">The electron transfer flavoprotein serves as a specific electron acceptor for several dehydrogenases, including five acyl-CoA dehydrogenases, glutaryl-CoA and sarcosine dehydrogenase. It transfers the electrons to the main mitochondrial respiratory chain via ETF-ubiquinone oxidoreductase (ETF dehydrogenase) (By similarity).</text>
</comment>
<comment type="cofactor">
    <cofactor evidence="1">
        <name>FAD</name>
        <dbReference type="ChEBI" id="CHEBI:57692"/>
    </cofactor>
    <text evidence="1">Binds 1 FAD per dimer.</text>
</comment>
<comment type="subunit">
    <text evidence="1">Heterodimer of an alpha and a beta subunit.</text>
</comment>
<comment type="subcellular location">
    <subcellularLocation>
        <location evidence="1">Mitochondrion matrix</location>
    </subcellularLocation>
</comment>
<comment type="alternative products">
    <event type="alternative splicing"/>
    <isoform>
        <id>Q75LJ3-1</id>
        <name>1</name>
        <sequence type="displayed"/>
    </isoform>
    <isoform>
        <id>Q75LJ3-2</id>
        <name>2</name>
        <sequence type="described" ref="VSP_032171 VSP_032172"/>
    </isoform>
</comment>
<comment type="similarity">
    <text evidence="3">Belongs to the ETF alpha-subunit/FixB family.</text>
</comment>
<name>ETFA_ORYSJ</name>
<accession>Q75LJ3</accession>
<accession>B7E6V7</accession>
<accession>Q75LJ2</accession>
<protein>
    <recommendedName>
        <fullName>Electron transfer flavoprotein subunit alpha, mitochondrial</fullName>
        <shortName>Alpha-ETF</shortName>
    </recommendedName>
</protein>
<keyword id="KW-0025">Alternative splicing</keyword>
<keyword id="KW-0249">Electron transport</keyword>
<keyword id="KW-0274">FAD</keyword>
<keyword id="KW-0285">Flavoprotein</keyword>
<keyword id="KW-0496">Mitochondrion</keyword>
<keyword id="KW-1185">Reference proteome</keyword>
<keyword id="KW-0809">Transit peptide</keyword>
<keyword id="KW-0813">Transport</keyword>
<feature type="transit peptide" description="Mitochondrion" evidence="2">
    <location>
        <begin position="1"/>
        <end status="unknown"/>
    </location>
</feature>
<feature type="chain" id="PRO_0000324178" description="Electron transfer flavoprotein subunit alpha, mitochondrial">
    <location>
        <begin status="unknown"/>
        <end position="358"/>
    </location>
</feature>
<feature type="binding site" evidence="1">
    <location>
        <begin position="298"/>
        <end position="326"/>
    </location>
    <ligand>
        <name>FAD</name>
        <dbReference type="ChEBI" id="CHEBI:57692"/>
    </ligand>
</feature>
<feature type="splice variant" id="VSP_032171" description="In isoform 2." evidence="3">
    <original>VDLSFLSE</original>
    <variation>EALGNLH</variation>
    <location>
        <begin position="208"/>
        <end position="215"/>
    </location>
</feature>
<feature type="splice variant" id="VSP_032172" description="In isoform 2." evidence="3">
    <location>
        <begin position="216"/>
        <end position="358"/>
    </location>
</feature>
<evidence type="ECO:0000250" key="1"/>
<evidence type="ECO:0000255" key="2"/>
<evidence type="ECO:0000305" key="3"/>
<sequence length="358" mass="37353">MAAMVVGALRRGTATAGGSSRSFARSLPRPVSTLVVAEHEGGFVKPSSLSALAAAEAIGKDDNRVSLLLGGSGPGLHKAAEHAASSHPLVSEVLVADSDVFAHPLAEPWAELLRSVQHKGGYSHVIASSTSFGKNLLPRAAALLDVSPVTDVTSISEPRVFVRPIYAGNALCTVRYTGEDPCMMSIRSTSFSPTEAMSEAKVAPITQVDLSFLSEGSSGKSAWVNLKSQDTERPDLANAPVVVTGGRGLKSAENFKVLEQLAEKLGAAVGATRAAVDAGFVPNELQVGQTGKIVAPELYMAFGVSGAIQHLAGMRDSKVIVAVNKDADAPIFQVADYGIVADLFEVLDELLKKLPDKK</sequence>
<dbReference type="EMBL" id="AC092557">
    <property type="protein sequence ID" value="AAR88584.1"/>
    <property type="molecule type" value="Genomic_DNA"/>
</dbReference>
<dbReference type="EMBL" id="AC092557">
    <property type="protein sequence ID" value="AAR88585.1"/>
    <property type="molecule type" value="Genomic_DNA"/>
</dbReference>
<dbReference type="EMBL" id="DP000009">
    <property type="protein sequence ID" value="ABF99746.1"/>
    <property type="molecule type" value="Genomic_DNA"/>
</dbReference>
<dbReference type="EMBL" id="AP008209">
    <property type="protein sequence ID" value="BAF13732.1"/>
    <property type="molecule type" value="Genomic_DNA"/>
</dbReference>
<dbReference type="EMBL" id="AP014959">
    <property type="protein sequence ID" value="BAS87246.1"/>
    <property type="molecule type" value="Genomic_DNA"/>
</dbReference>
<dbReference type="EMBL" id="CM000140">
    <property type="protein sequence ID" value="EAZ29204.1"/>
    <property type="molecule type" value="Genomic_DNA"/>
</dbReference>
<dbReference type="EMBL" id="AK061773">
    <property type="protein sequence ID" value="BAG88104.1"/>
    <property type="molecule type" value="mRNA"/>
</dbReference>
<dbReference type="EMBL" id="AK105896">
    <property type="protein sequence ID" value="BAG97422.1"/>
    <property type="molecule type" value="mRNA"/>
</dbReference>
<dbReference type="RefSeq" id="XP_015629762.1">
    <property type="nucleotide sequence ID" value="XM_015774276.1"/>
</dbReference>
<dbReference type="SMR" id="Q75LJ3"/>
<dbReference type="FunCoup" id="Q75LJ3">
    <property type="interactions" value="2247"/>
</dbReference>
<dbReference type="STRING" id="39947.Q75LJ3"/>
<dbReference type="PaxDb" id="39947-Q75LJ3"/>
<dbReference type="EnsemblPlants" id="Os03t0835400-01">
    <molecule id="Q75LJ3-1"/>
    <property type="protein sequence ID" value="Os03t0835400-01"/>
    <property type="gene ID" value="Os03g0835400"/>
</dbReference>
<dbReference type="Gramene" id="Os03t0835400-01">
    <molecule id="Q75LJ3-1"/>
    <property type="protein sequence ID" value="Os03t0835400-01"/>
    <property type="gene ID" value="Os03g0835400"/>
</dbReference>
<dbReference type="KEGG" id="dosa:Os03g0835400"/>
<dbReference type="eggNOG" id="KOG3954">
    <property type="taxonomic scope" value="Eukaryota"/>
</dbReference>
<dbReference type="HOGENOM" id="CLU_034178_0_0_1"/>
<dbReference type="InParanoid" id="Q75LJ3"/>
<dbReference type="OMA" id="HHICGIG"/>
<dbReference type="OrthoDB" id="1715808at2759"/>
<dbReference type="Proteomes" id="UP000000763">
    <property type="component" value="Chromosome 3"/>
</dbReference>
<dbReference type="Proteomes" id="UP000007752">
    <property type="component" value="Chromosome 3"/>
</dbReference>
<dbReference type="Proteomes" id="UP000059680">
    <property type="component" value="Chromosome 3"/>
</dbReference>
<dbReference type="GO" id="GO:0005759">
    <property type="term" value="C:mitochondrial matrix"/>
    <property type="evidence" value="ECO:0007669"/>
    <property type="project" value="UniProtKB-SubCell"/>
</dbReference>
<dbReference type="GO" id="GO:0005739">
    <property type="term" value="C:mitochondrion"/>
    <property type="evidence" value="ECO:0000318"/>
    <property type="project" value="GO_Central"/>
</dbReference>
<dbReference type="GO" id="GO:0009055">
    <property type="term" value="F:electron transfer activity"/>
    <property type="evidence" value="ECO:0000318"/>
    <property type="project" value="GO_Central"/>
</dbReference>
<dbReference type="GO" id="GO:0050660">
    <property type="term" value="F:flavin adenine dinucleotide binding"/>
    <property type="evidence" value="ECO:0000318"/>
    <property type="project" value="GO_Central"/>
</dbReference>
<dbReference type="GO" id="GO:0033539">
    <property type="term" value="P:fatty acid beta-oxidation using acyl-CoA dehydrogenase"/>
    <property type="evidence" value="ECO:0000318"/>
    <property type="project" value="GO_Central"/>
</dbReference>
<dbReference type="CDD" id="cd01715">
    <property type="entry name" value="ETF_alpha"/>
    <property type="match status" value="1"/>
</dbReference>
<dbReference type="FunFam" id="3.40.50.620:FF:000157">
    <property type="entry name" value="Electron transfer flavoprotein subunit alpha, mitochondrial"/>
    <property type="match status" value="1"/>
</dbReference>
<dbReference type="FunFam" id="3.40.50.1220:FF:000001">
    <property type="entry name" value="Electron transfer flavoprotein, alpha subunit"/>
    <property type="match status" value="1"/>
</dbReference>
<dbReference type="Gene3D" id="3.40.50.620">
    <property type="entry name" value="HUPs"/>
    <property type="match status" value="1"/>
</dbReference>
<dbReference type="Gene3D" id="3.40.50.1220">
    <property type="entry name" value="TPP-binding domain"/>
    <property type="match status" value="1"/>
</dbReference>
<dbReference type="InterPro" id="IPR029035">
    <property type="entry name" value="DHS-like_NAD/FAD-binding_dom"/>
</dbReference>
<dbReference type="InterPro" id="IPR014730">
    <property type="entry name" value="ETF_a/b_N"/>
</dbReference>
<dbReference type="InterPro" id="IPR001308">
    <property type="entry name" value="ETF_a/FixB"/>
</dbReference>
<dbReference type="InterPro" id="IPR033947">
    <property type="entry name" value="ETF_alpha_N"/>
</dbReference>
<dbReference type="InterPro" id="IPR014731">
    <property type="entry name" value="ETF_asu_C"/>
</dbReference>
<dbReference type="InterPro" id="IPR018206">
    <property type="entry name" value="ETF_asu_C_CS"/>
</dbReference>
<dbReference type="InterPro" id="IPR014729">
    <property type="entry name" value="Rossmann-like_a/b/a_fold"/>
</dbReference>
<dbReference type="PANTHER" id="PTHR43153">
    <property type="entry name" value="ELECTRON TRANSFER FLAVOPROTEIN ALPHA"/>
    <property type="match status" value="1"/>
</dbReference>
<dbReference type="PANTHER" id="PTHR43153:SF1">
    <property type="entry name" value="ELECTRON TRANSFER FLAVOPROTEIN SUBUNIT ALPHA, MITOCHONDRIAL"/>
    <property type="match status" value="1"/>
</dbReference>
<dbReference type="Pfam" id="PF01012">
    <property type="entry name" value="ETF"/>
    <property type="match status" value="1"/>
</dbReference>
<dbReference type="Pfam" id="PF00766">
    <property type="entry name" value="ETF_alpha"/>
    <property type="match status" value="1"/>
</dbReference>
<dbReference type="PIRSF" id="PIRSF000089">
    <property type="entry name" value="Electra_flavoP_a"/>
    <property type="match status" value="1"/>
</dbReference>
<dbReference type="SMART" id="SM00893">
    <property type="entry name" value="ETF"/>
    <property type="match status" value="1"/>
</dbReference>
<dbReference type="SUPFAM" id="SSF52402">
    <property type="entry name" value="Adenine nucleotide alpha hydrolases-like"/>
    <property type="match status" value="1"/>
</dbReference>
<dbReference type="SUPFAM" id="SSF52467">
    <property type="entry name" value="DHS-like NAD/FAD-binding domain"/>
    <property type="match status" value="1"/>
</dbReference>
<dbReference type="PROSITE" id="PS00696">
    <property type="entry name" value="ETF_ALPHA"/>
    <property type="match status" value="1"/>
</dbReference>
<organism>
    <name type="scientific">Oryza sativa subsp. japonica</name>
    <name type="common">Rice</name>
    <dbReference type="NCBI Taxonomy" id="39947"/>
    <lineage>
        <taxon>Eukaryota</taxon>
        <taxon>Viridiplantae</taxon>
        <taxon>Streptophyta</taxon>
        <taxon>Embryophyta</taxon>
        <taxon>Tracheophyta</taxon>
        <taxon>Spermatophyta</taxon>
        <taxon>Magnoliopsida</taxon>
        <taxon>Liliopsida</taxon>
        <taxon>Poales</taxon>
        <taxon>Poaceae</taxon>
        <taxon>BOP clade</taxon>
        <taxon>Oryzoideae</taxon>
        <taxon>Oryzeae</taxon>
        <taxon>Oryzinae</taxon>
        <taxon>Oryza</taxon>
        <taxon>Oryza sativa</taxon>
    </lineage>
</organism>
<proteinExistence type="evidence at transcript level"/>
<gene>
    <name type="primary">ETFA</name>
    <name type="ordered locus">Os03g0835400</name>
    <name type="ordered locus">LOC_Os03g61920</name>
    <name type="ORF">OsJ_012687</name>
    <name type="ORF">OSJNBa0096I06.15</name>
</gene>